<geneLocation type="chloroplast"/>
<proteinExistence type="inferred from homology"/>
<accession>B2XWJ0</accession>
<protein>
    <recommendedName>
        <fullName evidence="1">Cytochrome c biogenesis protein CcsA</fullName>
    </recommendedName>
</protein>
<comment type="function">
    <text evidence="1">Required during biogenesis of c-type cytochromes (cytochrome c6 and cytochrome f) at the step of heme attachment.</text>
</comment>
<comment type="subunit">
    <text evidence="1">May interact with Ccs1.</text>
</comment>
<comment type="subcellular location">
    <subcellularLocation>
        <location evidence="1">Plastid</location>
        <location evidence="1">Chloroplast thylakoid membrane</location>
        <topology evidence="1">Multi-pass membrane protein</topology>
    </subcellularLocation>
</comment>
<comment type="similarity">
    <text evidence="1">Belongs to the CcmF/CycK/Ccl1/NrfE/CcsA family.</text>
</comment>
<feature type="chain" id="PRO_0000353753" description="Cytochrome c biogenesis protein CcsA">
    <location>
        <begin position="1"/>
        <end position="319"/>
    </location>
</feature>
<feature type="transmembrane region" description="Helical" evidence="1">
    <location>
        <begin position="15"/>
        <end position="35"/>
    </location>
</feature>
<feature type="transmembrane region" description="Helical" evidence="1">
    <location>
        <begin position="44"/>
        <end position="64"/>
    </location>
</feature>
<feature type="transmembrane region" description="Helical" evidence="1">
    <location>
        <begin position="71"/>
        <end position="91"/>
    </location>
</feature>
<feature type="transmembrane region" description="Helical" evidence="1">
    <location>
        <begin position="96"/>
        <end position="116"/>
    </location>
</feature>
<feature type="transmembrane region" description="Helical" evidence="1">
    <location>
        <begin position="141"/>
        <end position="161"/>
    </location>
</feature>
<feature type="transmembrane region" description="Helical" evidence="1">
    <location>
        <begin position="223"/>
        <end position="243"/>
    </location>
</feature>
<feature type="transmembrane region" description="Helical" evidence="1">
    <location>
        <begin position="258"/>
        <end position="278"/>
    </location>
</feature>
<feature type="transmembrane region" description="Helical" evidence="1">
    <location>
        <begin position="284"/>
        <end position="304"/>
    </location>
</feature>
<reference key="1">
    <citation type="journal article" date="2008" name="BMC Plant Biol.">
        <title>Comparative chloroplast genomics and phylogenetics of Fagopyrum esculentum ssp. ancestrale - a wild ancestor of cultivated buckwheat.</title>
        <authorList>
            <person name="Logacheva M.D."/>
            <person name="Samigullin T.H."/>
            <person name="Dhingra A."/>
            <person name="Penin A.A."/>
        </authorList>
    </citation>
    <scope>NUCLEOTIDE SEQUENCE [LARGE SCALE GENOMIC DNA]</scope>
</reference>
<organism>
    <name type="scientific">Fagopyrum esculentum subsp. ancestrale</name>
    <name type="common">Wild buckwheat</name>
    <dbReference type="NCBI Taxonomy" id="180217"/>
    <lineage>
        <taxon>Eukaryota</taxon>
        <taxon>Viridiplantae</taxon>
        <taxon>Streptophyta</taxon>
        <taxon>Embryophyta</taxon>
        <taxon>Tracheophyta</taxon>
        <taxon>Spermatophyta</taxon>
        <taxon>Magnoliopsida</taxon>
        <taxon>eudicotyledons</taxon>
        <taxon>Gunneridae</taxon>
        <taxon>Pentapetalae</taxon>
        <taxon>Caryophyllales</taxon>
        <taxon>Polygonaceae</taxon>
        <taxon>Polygonoideae</taxon>
        <taxon>Fagopyreae</taxon>
        <taxon>Fagopyrum</taxon>
    </lineage>
</organism>
<evidence type="ECO:0000255" key="1">
    <source>
        <dbReference type="HAMAP-Rule" id="MF_01391"/>
    </source>
</evidence>
<gene>
    <name evidence="1" type="primary">ccsA</name>
</gene>
<dbReference type="EMBL" id="EU254477">
    <property type="protein sequence ID" value="ABY79781.1"/>
    <property type="molecule type" value="Genomic_DNA"/>
</dbReference>
<dbReference type="RefSeq" id="YP_001936566.1">
    <property type="nucleotide sequence ID" value="NC_010776.1"/>
</dbReference>
<dbReference type="SMR" id="B2XWJ0"/>
<dbReference type="GeneID" id="6335965"/>
<dbReference type="GO" id="GO:0009535">
    <property type="term" value="C:chloroplast thylakoid membrane"/>
    <property type="evidence" value="ECO:0007669"/>
    <property type="project" value="UniProtKB-SubCell"/>
</dbReference>
<dbReference type="GO" id="GO:0005886">
    <property type="term" value="C:plasma membrane"/>
    <property type="evidence" value="ECO:0007669"/>
    <property type="project" value="TreeGrafter"/>
</dbReference>
<dbReference type="GO" id="GO:0020037">
    <property type="term" value="F:heme binding"/>
    <property type="evidence" value="ECO:0007669"/>
    <property type="project" value="InterPro"/>
</dbReference>
<dbReference type="GO" id="GO:0017004">
    <property type="term" value="P:cytochrome complex assembly"/>
    <property type="evidence" value="ECO:0007669"/>
    <property type="project" value="UniProtKB-UniRule"/>
</dbReference>
<dbReference type="HAMAP" id="MF_01391">
    <property type="entry name" value="CytC_CcsA"/>
    <property type="match status" value="1"/>
</dbReference>
<dbReference type="InterPro" id="IPR002541">
    <property type="entry name" value="Cyt_c_assembly"/>
</dbReference>
<dbReference type="InterPro" id="IPR017562">
    <property type="entry name" value="Cyt_c_biogenesis_CcsA"/>
</dbReference>
<dbReference type="InterPro" id="IPR045062">
    <property type="entry name" value="Cyt_c_biogenesis_CcsA/CcmC"/>
</dbReference>
<dbReference type="NCBIfam" id="TIGR03144">
    <property type="entry name" value="cytochr_II_ccsB"/>
    <property type="match status" value="1"/>
</dbReference>
<dbReference type="PANTHER" id="PTHR30071:SF1">
    <property type="entry name" value="CYTOCHROME B_B6 PROTEIN-RELATED"/>
    <property type="match status" value="1"/>
</dbReference>
<dbReference type="PANTHER" id="PTHR30071">
    <property type="entry name" value="HEME EXPORTER PROTEIN C"/>
    <property type="match status" value="1"/>
</dbReference>
<dbReference type="Pfam" id="PF01578">
    <property type="entry name" value="Cytochrom_C_asm"/>
    <property type="match status" value="1"/>
</dbReference>
<name>CCSA_FAGEA</name>
<keyword id="KW-0150">Chloroplast</keyword>
<keyword id="KW-0201">Cytochrome c-type biogenesis</keyword>
<keyword id="KW-0472">Membrane</keyword>
<keyword id="KW-0934">Plastid</keyword>
<keyword id="KW-0793">Thylakoid</keyword>
<keyword id="KW-0812">Transmembrane</keyword>
<keyword id="KW-1133">Transmembrane helix</keyword>
<sequence>MIFFTFEHLFNHISFSIVSIVITIHLITLVVNKIVELDDSLEKGMILTFSCITGLLVIRWIFAGHFPLSDLYESLIFLSWSFYIIHMIPYFKNKKLSAITAPGAIFTQGFATSGFFTQMKQSTILVPALQSQWLMMHVSMMILAYAALLCGSLLSVALLVITFQNNISLFGKRKLLLNESLFIDKIQYVNEKNNILQGTYLFSLINFYRYQLIEQLDRWSSRVISLGFLFLTMGILSGAVWANEAWGSYWNWDPKETWAFITWTIFAIYLHIKTNINLKSENSAIVASIGFLIIWICYFGVNLLGIGLHSYGSFILKST</sequence>